<feature type="chain" id="PRO_0000213203" description="N-acylneuraminate cytidylyltransferase">
    <location>
        <begin position="1"/>
        <end position="419"/>
    </location>
</feature>
<keyword id="KW-0972">Capsule biogenesis/degradation</keyword>
<keyword id="KW-0963">Cytoplasm</keyword>
<keyword id="KW-0903">Direct protein sequencing</keyword>
<keyword id="KW-0460">Magnesium</keyword>
<keyword id="KW-0464">Manganese</keyword>
<keyword id="KW-0548">Nucleotidyltransferase</keyword>
<keyword id="KW-0808">Transferase</keyword>
<organism>
    <name type="scientific">Escherichia coli O18:K1:H7 (strain RS218 / NMEC)</name>
    <dbReference type="NCBI Taxonomy" id="439184"/>
    <lineage>
        <taxon>Bacteria</taxon>
        <taxon>Pseudomonadati</taxon>
        <taxon>Pseudomonadota</taxon>
        <taxon>Gammaproteobacteria</taxon>
        <taxon>Enterobacterales</taxon>
        <taxon>Enterobacteriaceae</taxon>
        <taxon>Escherichia</taxon>
    </lineage>
</organism>
<reference key="1">
    <citation type="journal article" date="1989" name="J. Biol. Chem.">
        <title>Sequence of the cloned Escherichia coli K1 CMP-N-acetylneuraminic acid synthetase gene.</title>
        <authorList>
            <person name="Zapata G."/>
            <person name="Vann W.F."/>
            <person name="Aaronson W."/>
            <person name="Lewis M.S."/>
            <person name="Moos M."/>
        </authorList>
    </citation>
    <scope>NUCLEOTIDE SEQUENCE [GENOMIC DNA]</scope>
    <scope>PROTEIN SEQUENCE OF 406-419</scope>
    <scope>SUBUNIT</scope>
    <source>
        <strain>RS218 / NMEC</strain>
    </source>
</reference>
<reference key="2">
    <citation type="journal article" date="1987" name="J. Biol. Chem.">
        <title>Purification, properties, and genetic location of Escherichia coli cytidine 5'-monophosphate N-acetylneuraminic acid synthetase.</title>
        <authorList>
            <person name="Vann W.F."/>
            <person name="Silver R.P."/>
            <person name="Abeijon C."/>
            <person name="Chang K."/>
            <person name="Aaronson W."/>
            <person name="Sutton A."/>
            <person name="Finn C.W."/>
            <person name="Lindner W."/>
            <person name="Kotsatos M."/>
        </authorList>
    </citation>
    <scope>PROTEIN SEQUENCE OF 1-13</scope>
    <scope>FUNCTION</scope>
    <scope>CATALYTIC ACTIVITY</scope>
    <scope>COFACTOR</scope>
    <scope>ACTIVITY REGULATION</scope>
    <scope>BIOPHYSICOCHEMICAL PROPERTIES</scope>
    <scope>SUBCELLULAR LOCATION</scope>
    <source>
        <strain>RS218 / NMEC</strain>
    </source>
</reference>
<accession>P13266</accession>
<sequence>MRTKIIAIIPARSGSKGLRNKNALMLIDKPLLAYTIEAALQSEMFEKVIVTTDSEQYGAIAESYGADFLLRPEELATDKASSFEFIKHALSIYTDYESFALLQPTSPFRDSTHIIEAVKLYQTLEKYQCVVSVTRSNKPSQIIRPLDDYSTLSFFDLDYSKYNRNSIVEYHPNGAIFIANKQHYLHTKHFFGRYSLAYIMDKESSLDIDDRMDFELAITIQQKKNRQKIDLYQNIHNRINEKRNEFDSVSDITLIGHSLFDYWDVKKINDIEVNNLGIAGINSKEYYEYIIEKELIVNFGEFVFIFFGTNDIVVSDWKKEDTLWYLKKTCQYIKKKNAASKIYLLSVPPVFGRIDRDNRIINDLNSYLRENVDFAKFISLDHVLKDSYGNLNKMYTYDGLHFNSNGYTVLENEIAEIVK</sequence>
<proteinExistence type="evidence at protein level"/>
<dbReference type="EC" id="2.7.7.43"/>
<dbReference type="EMBL" id="J05023">
    <property type="protein sequence ID" value="AAA24210.1"/>
    <property type="molecule type" value="Genomic_DNA"/>
</dbReference>
<dbReference type="PIR" id="A36509">
    <property type="entry name" value="A36509"/>
</dbReference>
<dbReference type="SMR" id="P13266"/>
<dbReference type="BioCyc" id="MetaCyc:MONOMER-14544"/>
<dbReference type="GO" id="GO:0005737">
    <property type="term" value="C:cytoplasm"/>
    <property type="evidence" value="ECO:0007669"/>
    <property type="project" value="UniProtKB-SubCell"/>
</dbReference>
<dbReference type="GO" id="GO:0016788">
    <property type="term" value="F:hydrolase activity, acting on ester bonds"/>
    <property type="evidence" value="ECO:0007669"/>
    <property type="project" value="UniProtKB-ARBA"/>
</dbReference>
<dbReference type="GO" id="GO:0008781">
    <property type="term" value="F:N-acylneuraminate cytidylyltransferase activity"/>
    <property type="evidence" value="ECO:0007669"/>
    <property type="project" value="UniProtKB-EC"/>
</dbReference>
<dbReference type="CDD" id="cd02513">
    <property type="entry name" value="CMP-NeuAc_Synthase"/>
    <property type="match status" value="1"/>
</dbReference>
<dbReference type="CDD" id="cd01841">
    <property type="entry name" value="NnaC_like"/>
    <property type="match status" value="1"/>
</dbReference>
<dbReference type="Gene3D" id="3.40.50.1110">
    <property type="entry name" value="SGNH hydrolase"/>
    <property type="match status" value="1"/>
</dbReference>
<dbReference type="Gene3D" id="3.90.550.10">
    <property type="entry name" value="Spore Coat Polysaccharide Biosynthesis Protein SpsA, Chain A"/>
    <property type="match status" value="1"/>
</dbReference>
<dbReference type="InterPro" id="IPR050793">
    <property type="entry name" value="CMP-NeuNAc_synthase"/>
</dbReference>
<dbReference type="InterPro" id="IPR003329">
    <property type="entry name" value="Cytidylyl_trans"/>
</dbReference>
<dbReference type="InterPro" id="IPR029044">
    <property type="entry name" value="Nucleotide-diphossugar_trans"/>
</dbReference>
<dbReference type="InterPro" id="IPR013830">
    <property type="entry name" value="SGNH_hydro"/>
</dbReference>
<dbReference type="InterPro" id="IPR036514">
    <property type="entry name" value="SGNH_hydro_sf"/>
</dbReference>
<dbReference type="PANTHER" id="PTHR21485">
    <property type="entry name" value="HAD SUPERFAMILY MEMBERS CMAS AND KDSC"/>
    <property type="match status" value="1"/>
</dbReference>
<dbReference type="PANTHER" id="PTHR21485:SF6">
    <property type="entry name" value="N-ACYLNEURAMINATE CYTIDYLYLTRANSFERASE-RELATED"/>
    <property type="match status" value="1"/>
</dbReference>
<dbReference type="Pfam" id="PF02348">
    <property type="entry name" value="CTP_transf_3"/>
    <property type="match status" value="1"/>
</dbReference>
<dbReference type="Pfam" id="PF13472">
    <property type="entry name" value="Lipase_GDSL_2"/>
    <property type="match status" value="1"/>
</dbReference>
<dbReference type="SUPFAM" id="SSF53448">
    <property type="entry name" value="Nucleotide-diphospho-sugar transferases"/>
    <property type="match status" value="1"/>
</dbReference>
<dbReference type="SUPFAM" id="SSF52266">
    <property type="entry name" value="SGNH hydrolase"/>
    <property type="match status" value="1"/>
</dbReference>
<protein>
    <recommendedName>
        <fullName>N-acylneuraminate cytidylyltransferase</fullName>
        <ecNumber>2.7.7.43</ecNumber>
    </recommendedName>
    <alternativeName>
        <fullName>CMP-N-acetylneuraminic acid synthase</fullName>
        <shortName>CMP-NeuNAc synthase</shortName>
    </alternativeName>
</protein>
<gene>
    <name type="primary">neuA</name>
</gene>
<name>NEUA_ECOK8</name>
<evidence type="ECO:0000269" key="1">
    <source>
    </source>
</evidence>
<evidence type="ECO:0000269" key="2">
    <source>
    </source>
</evidence>
<evidence type="ECO:0000305" key="3"/>
<comment type="function">
    <text evidence="2">Catalyzes the formation of CMP-N-acetylneuraminic acid (CMP-NeuNAc), which is essential for the formation of the capsule.</text>
</comment>
<comment type="catalytic activity">
    <reaction evidence="2">
        <text>an N-acylneuraminate + CTP = a CMP-N-acyl-beta-neuraminate + diphosphate</text>
        <dbReference type="Rhea" id="RHEA:11344"/>
        <dbReference type="ChEBI" id="CHEBI:33019"/>
        <dbReference type="ChEBI" id="CHEBI:37563"/>
        <dbReference type="ChEBI" id="CHEBI:60073"/>
        <dbReference type="ChEBI" id="CHEBI:68671"/>
        <dbReference type="EC" id="2.7.7.43"/>
    </reaction>
</comment>
<comment type="cofactor">
    <cofactor evidence="2">
        <name>Mg(2+)</name>
        <dbReference type="ChEBI" id="CHEBI:18420"/>
    </cofactor>
    <cofactor evidence="2">
        <name>Mn(2+)</name>
        <dbReference type="ChEBI" id="CHEBI:29035"/>
    </cofactor>
</comment>
<comment type="activity regulation">
    <text evidence="2">Inhibited by the CTP analogs 5-mercuri-CTP and CTP-2',3'-dialdehyde.</text>
</comment>
<comment type="biophysicochemical properties">
    <kinetics>
        <KM evidence="2">4 mM for NeuNAc (at pH 9.0)</KM>
        <KM evidence="2">0.31 mM for CTP (at pH 9.0)</KM>
    </kinetics>
    <phDependence>
        <text evidence="2">Optimum pH is 9.0-10.0.</text>
    </phDependence>
</comment>
<comment type="subunit">
    <text evidence="1">Monomer. May form aggregates.</text>
</comment>
<comment type="subcellular location">
    <subcellularLocation>
        <location evidence="2">Cytoplasm</location>
    </subcellularLocation>
</comment>
<comment type="similarity">
    <text evidence="3">Belongs to the CMP-NeuNAc synthase family.</text>
</comment>